<reference key="1">
    <citation type="journal article" date="2008" name="Biol. Direct">
        <title>Complete genome sequence of the extremely acidophilic methanotroph isolate V4, Methylacidiphilum infernorum, a representative of the bacterial phylum Verrucomicrobia.</title>
        <authorList>
            <person name="Hou S."/>
            <person name="Makarova K.S."/>
            <person name="Saw J.H."/>
            <person name="Senin P."/>
            <person name="Ly B.V."/>
            <person name="Zhou Z."/>
            <person name="Ren Y."/>
            <person name="Wang J."/>
            <person name="Galperin M.Y."/>
            <person name="Omelchenko M.V."/>
            <person name="Wolf Y.I."/>
            <person name="Yutin N."/>
            <person name="Koonin E.V."/>
            <person name="Stott M.B."/>
            <person name="Mountain B.W."/>
            <person name="Crowe M.A."/>
            <person name="Smirnova A.V."/>
            <person name="Dunfield P.F."/>
            <person name="Feng L."/>
            <person name="Wang L."/>
            <person name="Alam M."/>
        </authorList>
    </citation>
    <scope>NUCLEOTIDE SEQUENCE [LARGE SCALE GENOMIC DNA]</scope>
    <source>
        <strain>Isolate V4</strain>
    </source>
</reference>
<dbReference type="EC" id="4.2.3.5" evidence="1"/>
<dbReference type="EMBL" id="CP000975">
    <property type="protein sequence ID" value="ACD82244.1"/>
    <property type="molecule type" value="Genomic_DNA"/>
</dbReference>
<dbReference type="RefSeq" id="WP_012462526.1">
    <property type="nucleotide sequence ID" value="NC_010794.1"/>
</dbReference>
<dbReference type="SMR" id="B3DXL0"/>
<dbReference type="STRING" id="481448.Minf_0184"/>
<dbReference type="KEGG" id="min:Minf_0184"/>
<dbReference type="eggNOG" id="COG0082">
    <property type="taxonomic scope" value="Bacteria"/>
</dbReference>
<dbReference type="HOGENOM" id="CLU_034547_0_1_0"/>
<dbReference type="OrthoDB" id="9771806at2"/>
<dbReference type="UniPathway" id="UPA00053">
    <property type="reaction ID" value="UER00090"/>
</dbReference>
<dbReference type="Proteomes" id="UP000009149">
    <property type="component" value="Chromosome"/>
</dbReference>
<dbReference type="GO" id="GO:0005829">
    <property type="term" value="C:cytosol"/>
    <property type="evidence" value="ECO:0007669"/>
    <property type="project" value="TreeGrafter"/>
</dbReference>
<dbReference type="GO" id="GO:0004107">
    <property type="term" value="F:chorismate synthase activity"/>
    <property type="evidence" value="ECO:0007669"/>
    <property type="project" value="UniProtKB-UniRule"/>
</dbReference>
<dbReference type="GO" id="GO:0010181">
    <property type="term" value="F:FMN binding"/>
    <property type="evidence" value="ECO:0007669"/>
    <property type="project" value="TreeGrafter"/>
</dbReference>
<dbReference type="GO" id="GO:0008652">
    <property type="term" value="P:amino acid biosynthetic process"/>
    <property type="evidence" value="ECO:0007669"/>
    <property type="project" value="UniProtKB-KW"/>
</dbReference>
<dbReference type="GO" id="GO:0009073">
    <property type="term" value="P:aromatic amino acid family biosynthetic process"/>
    <property type="evidence" value="ECO:0007669"/>
    <property type="project" value="UniProtKB-KW"/>
</dbReference>
<dbReference type="GO" id="GO:0009423">
    <property type="term" value="P:chorismate biosynthetic process"/>
    <property type="evidence" value="ECO:0007669"/>
    <property type="project" value="UniProtKB-UniRule"/>
</dbReference>
<dbReference type="CDD" id="cd07304">
    <property type="entry name" value="Chorismate_synthase"/>
    <property type="match status" value="1"/>
</dbReference>
<dbReference type="FunFam" id="3.60.150.10:FF:000003">
    <property type="entry name" value="Chorismate synthase"/>
    <property type="match status" value="1"/>
</dbReference>
<dbReference type="Gene3D" id="3.60.150.10">
    <property type="entry name" value="Chorismate synthase AroC"/>
    <property type="match status" value="1"/>
</dbReference>
<dbReference type="HAMAP" id="MF_00300">
    <property type="entry name" value="Chorismate_synth"/>
    <property type="match status" value="1"/>
</dbReference>
<dbReference type="InterPro" id="IPR000453">
    <property type="entry name" value="Chorismate_synth"/>
</dbReference>
<dbReference type="InterPro" id="IPR035904">
    <property type="entry name" value="Chorismate_synth_AroC_sf"/>
</dbReference>
<dbReference type="InterPro" id="IPR020541">
    <property type="entry name" value="Chorismate_synthase_CS"/>
</dbReference>
<dbReference type="NCBIfam" id="TIGR00033">
    <property type="entry name" value="aroC"/>
    <property type="match status" value="1"/>
</dbReference>
<dbReference type="NCBIfam" id="NF003793">
    <property type="entry name" value="PRK05382.1"/>
    <property type="match status" value="1"/>
</dbReference>
<dbReference type="PANTHER" id="PTHR21085">
    <property type="entry name" value="CHORISMATE SYNTHASE"/>
    <property type="match status" value="1"/>
</dbReference>
<dbReference type="PANTHER" id="PTHR21085:SF0">
    <property type="entry name" value="CHORISMATE SYNTHASE"/>
    <property type="match status" value="1"/>
</dbReference>
<dbReference type="Pfam" id="PF01264">
    <property type="entry name" value="Chorismate_synt"/>
    <property type="match status" value="1"/>
</dbReference>
<dbReference type="PIRSF" id="PIRSF001456">
    <property type="entry name" value="Chorismate_synth"/>
    <property type="match status" value="1"/>
</dbReference>
<dbReference type="SUPFAM" id="SSF103263">
    <property type="entry name" value="Chorismate synthase, AroC"/>
    <property type="match status" value="1"/>
</dbReference>
<dbReference type="PROSITE" id="PS00787">
    <property type="entry name" value="CHORISMATE_SYNTHASE_1"/>
    <property type="match status" value="1"/>
</dbReference>
<dbReference type="PROSITE" id="PS00788">
    <property type="entry name" value="CHORISMATE_SYNTHASE_2"/>
    <property type="match status" value="1"/>
</dbReference>
<dbReference type="PROSITE" id="PS00789">
    <property type="entry name" value="CHORISMATE_SYNTHASE_3"/>
    <property type="match status" value="1"/>
</dbReference>
<proteinExistence type="inferred from homology"/>
<protein>
    <recommendedName>
        <fullName evidence="1">Chorismate synthase</fullName>
        <shortName evidence="1">CS</shortName>
        <ecNumber evidence="1">4.2.3.5</ecNumber>
    </recommendedName>
    <alternativeName>
        <fullName evidence="1">5-enolpyruvylshikimate-3-phosphate phospholyase</fullName>
    </alternativeName>
</protein>
<keyword id="KW-0028">Amino-acid biosynthesis</keyword>
<keyword id="KW-0057">Aromatic amino acid biosynthesis</keyword>
<keyword id="KW-0274">FAD</keyword>
<keyword id="KW-0285">Flavoprotein</keyword>
<keyword id="KW-0288">FMN</keyword>
<keyword id="KW-0456">Lyase</keyword>
<keyword id="KW-0521">NADP</keyword>
<comment type="function">
    <text evidence="1">Catalyzes the anti-1,4-elimination of the C-3 phosphate and the C-6 proR hydrogen from 5-enolpyruvylshikimate-3-phosphate (EPSP) to yield chorismate, which is the branch point compound that serves as the starting substrate for the three terminal pathways of aromatic amino acid biosynthesis. This reaction introduces a second double bond into the aromatic ring system.</text>
</comment>
<comment type="catalytic activity">
    <reaction evidence="1">
        <text>5-O-(1-carboxyvinyl)-3-phosphoshikimate = chorismate + phosphate</text>
        <dbReference type="Rhea" id="RHEA:21020"/>
        <dbReference type="ChEBI" id="CHEBI:29748"/>
        <dbReference type="ChEBI" id="CHEBI:43474"/>
        <dbReference type="ChEBI" id="CHEBI:57701"/>
        <dbReference type="EC" id="4.2.3.5"/>
    </reaction>
</comment>
<comment type="cofactor">
    <cofactor evidence="1">
        <name>FMNH2</name>
        <dbReference type="ChEBI" id="CHEBI:57618"/>
    </cofactor>
    <text evidence="1">Reduced FMN (FMNH(2)).</text>
</comment>
<comment type="pathway">
    <text evidence="1">Metabolic intermediate biosynthesis; chorismate biosynthesis; chorismate from D-erythrose 4-phosphate and phosphoenolpyruvate: step 7/7.</text>
</comment>
<comment type="subunit">
    <text evidence="1">Homotetramer.</text>
</comment>
<comment type="similarity">
    <text evidence="1">Belongs to the chorismate synthase family.</text>
</comment>
<name>AROC_METI4</name>
<accession>B3DXL0</accession>
<sequence length="366" mass="40267">MPNTFGHLFRITTWGESHGKGVGVVIDGCPPRIPLSEEDIQKELDRRRPGQSKITTQRKERDIAAILSGTFNGMTLGTPIMIWVKNEDARPEAYAEMEKIYRPSHADFTYQAKYGIRNWQGGGRSSARETIGRVAGGAVGGKVLQFLYPEIEVIAWVSEVHGLKSLCDPNTVTREDVESNILRWPNAENLGEALKEIERAQKEGDTVGGIVECIVRGMPVGLGEPVFDKLEADLAKAMLSLPASKGFEIGSGFRGALMRGSEHNDPFYMEGNKVRTKTNWSGGVQGGISNGENLYFRVAFKPVATIAQEQQTVSVDGEEVILRARGRHDPCVLPRAVPIVEAMTKLVLVDHALRQKAIELTPRSFS</sequence>
<gene>
    <name evidence="1" type="primary">aroC</name>
    <name type="ordered locus">Minf_0184</name>
</gene>
<feature type="chain" id="PRO_1000115369" description="Chorismate synthase">
    <location>
        <begin position="1"/>
        <end position="366"/>
    </location>
</feature>
<feature type="binding site" evidence="1">
    <location>
        <position position="47"/>
    </location>
    <ligand>
        <name>NADP(+)</name>
        <dbReference type="ChEBI" id="CHEBI:58349"/>
    </ligand>
</feature>
<feature type="binding site" evidence="1">
    <location>
        <begin position="124"/>
        <end position="126"/>
    </location>
    <ligand>
        <name>FMN</name>
        <dbReference type="ChEBI" id="CHEBI:58210"/>
    </ligand>
</feature>
<feature type="binding site" evidence="1">
    <location>
        <position position="286"/>
    </location>
    <ligand>
        <name>FMN</name>
        <dbReference type="ChEBI" id="CHEBI:58210"/>
    </ligand>
</feature>
<feature type="binding site" evidence="1">
    <location>
        <begin position="301"/>
        <end position="305"/>
    </location>
    <ligand>
        <name>FMN</name>
        <dbReference type="ChEBI" id="CHEBI:58210"/>
    </ligand>
</feature>
<feature type="binding site" evidence="1">
    <location>
        <position position="327"/>
    </location>
    <ligand>
        <name>FMN</name>
        <dbReference type="ChEBI" id="CHEBI:58210"/>
    </ligand>
</feature>
<evidence type="ECO:0000255" key="1">
    <source>
        <dbReference type="HAMAP-Rule" id="MF_00300"/>
    </source>
</evidence>
<organism>
    <name type="scientific">Methylacidiphilum infernorum (isolate V4)</name>
    <name type="common">Methylokorus infernorum (strain V4)</name>
    <dbReference type="NCBI Taxonomy" id="481448"/>
    <lineage>
        <taxon>Bacteria</taxon>
        <taxon>Pseudomonadati</taxon>
        <taxon>Verrucomicrobiota</taxon>
        <taxon>Methylacidiphilae</taxon>
        <taxon>Methylacidiphilales</taxon>
        <taxon>Methylacidiphilaceae</taxon>
        <taxon>Methylacidiphilum (ex Ratnadevi et al. 2023)</taxon>
    </lineage>
</organism>